<feature type="chain" id="PRO_1000008209" description="Translation initiation factor IF-2">
    <location>
        <begin position="1"/>
        <end position="971"/>
    </location>
</feature>
<feature type="domain" description="tr-type G">
    <location>
        <begin position="471"/>
        <end position="640"/>
    </location>
</feature>
<feature type="region of interest" description="Disordered" evidence="3">
    <location>
        <begin position="48"/>
        <end position="86"/>
    </location>
</feature>
<feature type="region of interest" description="Disordered" evidence="3">
    <location>
        <begin position="100"/>
        <end position="381"/>
    </location>
</feature>
<feature type="region of interest" description="G1" evidence="1">
    <location>
        <begin position="480"/>
        <end position="487"/>
    </location>
</feature>
<feature type="region of interest" description="G2" evidence="1">
    <location>
        <begin position="505"/>
        <end position="509"/>
    </location>
</feature>
<feature type="region of interest" description="G3" evidence="1">
    <location>
        <begin position="526"/>
        <end position="529"/>
    </location>
</feature>
<feature type="region of interest" description="G4" evidence="1">
    <location>
        <begin position="580"/>
        <end position="583"/>
    </location>
</feature>
<feature type="region of interest" description="G5" evidence="1">
    <location>
        <begin position="616"/>
        <end position="618"/>
    </location>
</feature>
<feature type="compositionally biased region" description="Basic and acidic residues" evidence="3">
    <location>
        <begin position="48"/>
        <end position="63"/>
    </location>
</feature>
<feature type="compositionally biased region" description="Low complexity" evidence="3">
    <location>
        <begin position="105"/>
        <end position="114"/>
    </location>
</feature>
<feature type="compositionally biased region" description="Basic and acidic residues" evidence="3">
    <location>
        <begin position="121"/>
        <end position="181"/>
    </location>
</feature>
<feature type="compositionally biased region" description="Low complexity" evidence="3">
    <location>
        <begin position="182"/>
        <end position="202"/>
    </location>
</feature>
<feature type="compositionally biased region" description="Basic and acidic residues" evidence="3">
    <location>
        <begin position="210"/>
        <end position="261"/>
    </location>
</feature>
<feature type="compositionally biased region" description="Pro residues" evidence="3">
    <location>
        <begin position="277"/>
        <end position="286"/>
    </location>
</feature>
<feature type="compositionally biased region" description="Low complexity" evidence="3">
    <location>
        <begin position="304"/>
        <end position="326"/>
    </location>
</feature>
<feature type="compositionally biased region" description="Gly residues" evidence="3">
    <location>
        <begin position="356"/>
        <end position="369"/>
    </location>
</feature>
<feature type="binding site" evidence="2">
    <location>
        <begin position="480"/>
        <end position="487"/>
    </location>
    <ligand>
        <name>GTP</name>
        <dbReference type="ChEBI" id="CHEBI:37565"/>
    </ligand>
</feature>
<feature type="binding site" evidence="2">
    <location>
        <begin position="526"/>
        <end position="530"/>
    </location>
    <ligand>
        <name>GTP</name>
        <dbReference type="ChEBI" id="CHEBI:37565"/>
    </ligand>
</feature>
<feature type="binding site" evidence="2">
    <location>
        <begin position="580"/>
        <end position="583"/>
    </location>
    <ligand>
        <name>GTP</name>
        <dbReference type="ChEBI" id="CHEBI:37565"/>
    </ligand>
</feature>
<name>IF2_BURCH</name>
<reference key="1">
    <citation type="submission" date="2006-08" db="EMBL/GenBank/DDBJ databases">
        <title>Complete sequence of chromosome 1 of Burkholderia cenocepacia HI2424.</title>
        <authorList>
            <person name="Copeland A."/>
            <person name="Lucas S."/>
            <person name="Lapidus A."/>
            <person name="Barry K."/>
            <person name="Detter J.C."/>
            <person name="Glavina del Rio T."/>
            <person name="Hammon N."/>
            <person name="Israni S."/>
            <person name="Pitluck S."/>
            <person name="Chain P."/>
            <person name="Malfatti S."/>
            <person name="Shin M."/>
            <person name="Vergez L."/>
            <person name="Schmutz J."/>
            <person name="Larimer F."/>
            <person name="Land M."/>
            <person name="Hauser L."/>
            <person name="Kyrpides N."/>
            <person name="Kim E."/>
            <person name="LiPuma J.J."/>
            <person name="Gonzalez C.F."/>
            <person name="Konstantinidis K."/>
            <person name="Tiedje J.M."/>
            <person name="Richardson P."/>
        </authorList>
    </citation>
    <scope>NUCLEOTIDE SEQUENCE [LARGE SCALE GENOMIC DNA]</scope>
    <source>
        <strain>HI2424</strain>
    </source>
</reference>
<gene>
    <name evidence="2" type="primary">infB</name>
    <name type="ordered locus">Bcen2424_1500</name>
</gene>
<sequence>MASNNVAQFAAELKMPAGVLLEQLQAAGVQKASEDDALSETDKARLLDHLRKSHGATDGDKRKITLTRKHTSEIKQSDATGKARTIQVEVRKKRTFVKRDDVAEGADQGQAQVAEADDDAELKRREEEARREAELLEKQAQELRERQERLEREEAERRAREEAAEAERRRAEEEAATKRAAAEVAAAQQQAAAQQAAAEQEATPTQSAQDEARAAAERAAQREAAKKAEDAAREAADKARAEQEEISKRRAAAEAEARAIREMMNTPRKAVVKAVEPPKPVEPPKPAEAKGTLHKPAKPEGAQARPAVKKPAGAAAPATTQAPAGAGDRNKKPGAGKGGWQDDAAKRRGIKTRGDSSGGVDRGWRGGPKGRGRHQDSSTFQAPTEPIVREVHVPETVSVADLAHKMSIKASEVIKVMMKMGQMVTINQVLDQETAMIIVEELGHRAVAAKLDDPEALLVEGESGTDAEQLPRPPVVTVMGHVDHGKTSLLDHIRRAKVAAGEAGGITQHIGAYHVDTPRGVITFLDTPGHEAFTAMRARGAKATDIVVLVVAADDGVMPQTKEAIAHAKAGGVPIVVAINKIDKPEANPDRVKQELVAEGVVPEEYGGDSPFVPVSAKTGAGIDDLLENVLLQAEVLELKAPVEAPAKGIVIEAKLDKGKGPVATILVQSGTLNRGDIVLAGTAYGRVRAMLDENGKPTKEAGPSIPVEIQGLSEVPGAGEEVIVLPDERKAREIALFRQGKFRDVKLAKQQAAKLESMLEQMGEGEVQNLPLIIKADVQGSQEALVQSLLKLSTDEVRVQIVHSAVGGISENDVNLATASKAVIIGFNTRADAQARKLAEANGIDIRYYNIIYDAVDEVKAAMSGMLAPEKREVITGMVEVRQVFKVPKIGTVAGCMVTDGIVKRSSSVRVLRNNVVIFTGELESLKRFKDDVKEVKQGFECGMSVKNFNDVTEGDQFEVFEVTEVARTL</sequence>
<comment type="function">
    <text evidence="2">One of the essential components for the initiation of protein synthesis. Protects formylmethionyl-tRNA from spontaneous hydrolysis and promotes its binding to the 30S ribosomal subunits. Also involved in the hydrolysis of GTP during the formation of the 70S ribosomal complex.</text>
</comment>
<comment type="subcellular location">
    <subcellularLocation>
        <location evidence="2">Cytoplasm</location>
    </subcellularLocation>
</comment>
<comment type="similarity">
    <text evidence="2">Belongs to the TRAFAC class translation factor GTPase superfamily. Classic translation factor GTPase family. IF-2 subfamily.</text>
</comment>
<evidence type="ECO:0000250" key="1"/>
<evidence type="ECO:0000255" key="2">
    <source>
        <dbReference type="HAMAP-Rule" id="MF_00100"/>
    </source>
</evidence>
<evidence type="ECO:0000256" key="3">
    <source>
        <dbReference type="SAM" id="MobiDB-lite"/>
    </source>
</evidence>
<accession>A0K6X5</accession>
<keyword id="KW-0963">Cytoplasm</keyword>
<keyword id="KW-0342">GTP-binding</keyword>
<keyword id="KW-0396">Initiation factor</keyword>
<keyword id="KW-0547">Nucleotide-binding</keyword>
<keyword id="KW-0648">Protein biosynthesis</keyword>
<proteinExistence type="inferred from homology"/>
<organism>
    <name type="scientific">Burkholderia cenocepacia (strain HI2424)</name>
    <dbReference type="NCBI Taxonomy" id="331272"/>
    <lineage>
        <taxon>Bacteria</taxon>
        <taxon>Pseudomonadati</taxon>
        <taxon>Pseudomonadota</taxon>
        <taxon>Betaproteobacteria</taxon>
        <taxon>Burkholderiales</taxon>
        <taxon>Burkholderiaceae</taxon>
        <taxon>Burkholderia</taxon>
        <taxon>Burkholderia cepacia complex</taxon>
    </lineage>
</organism>
<protein>
    <recommendedName>
        <fullName evidence="2">Translation initiation factor IF-2</fullName>
    </recommendedName>
</protein>
<dbReference type="EMBL" id="CP000458">
    <property type="protein sequence ID" value="ABK08252.1"/>
    <property type="molecule type" value="Genomic_DNA"/>
</dbReference>
<dbReference type="RefSeq" id="WP_011545261.1">
    <property type="nucleotide sequence ID" value="NC_008542.1"/>
</dbReference>
<dbReference type="SMR" id="A0K6X5"/>
<dbReference type="KEGG" id="bch:Bcen2424_1500"/>
<dbReference type="HOGENOM" id="CLU_006301_6_0_4"/>
<dbReference type="GO" id="GO:0005829">
    <property type="term" value="C:cytosol"/>
    <property type="evidence" value="ECO:0007669"/>
    <property type="project" value="TreeGrafter"/>
</dbReference>
<dbReference type="GO" id="GO:0005525">
    <property type="term" value="F:GTP binding"/>
    <property type="evidence" value="ECO:0007669"/>
    <property type="project" value="UniProtKB-KW"/>
</dbReference>
<dbReference type="GO" id="GO:0003924">
    <property type="term" value="F:GTPase activity"/>
    <property type="evidence" value="ECO:0007669"/>
    <property type="project" value="UniProtKB-UniRule"/>
</dbReference>
<dbReference type="GO" id="GO:0003743">
    <property type="term" value="F:translation initiation factor activity"/>
    <property type="evidence" value="ECO:0007669"/>
    <property type="project" value="UniProtKB-UniRule"/>
</dbReference>
<dbReference type="CDD" id="cd01887">
    <property type="entry name" value="IF2_eIF5B"/>
    <property type="match status" value="1"/>
</dbReference>
<dbReference type="CDD" id="cd03702">
    <property type="entry name" value="IF2_mtIF2_II"/>
    <property type="match status" value="1"/>
</dbReference>
<dbReference type="CDD" id="cd03692">
    <property type="entry name" value="mtIF2_IVc"/>
    <property type="match status" value="1"/>
</dbReference>
<dbReference type="FunFam" id="2.40.30.10:FF:000007">
    <property type="entry name" value="Translation initiation factor IF-2"/>
    <property type="match status" value="1"/>
</dbReference>
<dbReference type="FunFam" id="2.40.30.10:FF:000008">
    <property type="entry name" value="Translation initiation factor IF-2"/>
    <property type="match status" value="1"/>
</dbReference>
<dbReference type="FunFam" id="3.40.50.10050:FF:000001">
    <property type="entry name" value="Translation initiation factor IF-2"/>
    <property type="match status" value="1"/>
</dbReference>
<dbReference type="FunFam" id="3.40.50.300:FF:000019">
    <property type="entry name" value="Translation initiation factor IF-2"/>
    <property type="match status" value="1"/>
</dbReference>
<dbReference type="Gene3D" id="3.40.50.300">
    <property type="entry name" value="P-loop containing nucleotide triphosphate hydrolases"/>
    <property type="match status" value="1"/>
</dbReference>
<dbReference type="Gene3D" id="3.30.56.50">
    <property type="entry name" value="Putative DNA-binding domain, N-terminal subdomain of bacterial translation initiation factor IF2"/>
    <property type="match status" value="1"/>
</dbReference>
<dbReference type="Gene3D" id="2.40.30.10">
    <property type="entry name" value="Translation factors"/>
    <property type="match status" value="2"/>
</dbReference>
<dbReference type="Gene3D" id="3.40.50.10050">
    <property type="entry name" value="Translation initiation factor IF- 2, domain 3"/>
    <property type="match status" value="1"/>
</dbReference>
<dbReference type="HAMAP" id="MF_00100_B">
    <property type="entry name" value="IF_2_B"/>
    <property type="match status" value="1"/>
</dbReference>
<dbReference type="InterPro" id="IPR009061">
    <property type="entry name" value="DNA-bd_dom_put_sf"/>
</dbReference>
<dbReference type="InterPro" id="IPR053905">
    <property type="entry name" value="EF-G-like_DII"/>
</dbReference>
<dbReference type="InterPro" id="IPR013575">
    <property type="entry name" value="IF2_assoc_dom_bac"/>
</dbReference>
<dbReference type="InterPro" id="IPR044145">
    <property type="entry name" value="IF2_II"/>
</dbReference>
<dbReference type="InterPro" id="IPR006847">
    <property type="entry name" value="IF2_N"/>
</dbReference>
<dbReference type="InterPro" id="IPR027417">
    <property type="entry name" value="P-loop_NTPase"/>
</dbReference>
<dbReference type="InterPro" id="IPR005225">
    <property type="entry name" value="Small_GTP-bd"/>
</dbReference>
<dbReference type="InterPro" id="IPR000795">
    <property type="entry name" value="T_Tr_GTP-bd_dom"/>
</dbReference>
<dbReference type="InterPro" id="IPR000178">
    <property type="entry name" value="TF_IF2_bacterial-like"/>
</dbReference>
<dbReference type="InterPro" id="IPR015760">
    <property type="entry name" value="TIF_IF2"/>
</dbReference>
<dbReference type="InterPro" id="IPR023115">
    <property type="entry name" value="TIF_IF2_dom3"/>
</dbReference>
<dbReference type="InterPro" id="IPR036925">
    <property type="entry name" value="TIF_IF2_dom3_sf"/>
</dbReference>
<dbReference type="InterPro" id="IPR009000">
    <property type="entry name" value="Transl_B-barrel_sf"/>
</dbReference>
<dbReference type="NCBIfam" id="TIGR00487">
    <property type="entry name" value="IF-2"/>
    <property type="match status" value="1"/>
</dbReference>
<dbReference type="NCBIfam" id="TIGR00231">
    <property type="entry name" value="small_GTP"/>
    <property type="match status" value="1"/>
</dbReference>
<dbReference type="PANTHER" id="PTHR43381:SF5">
    <property type="entry name" value="TR-TYPE G DOMAIN-CONTAINING PROTEIN"/>
    <property type="match status" value="1"/>
</dbReference>
<dbReference type="PANTHER" id="PTHR43381">
    <property type="entry name" value="TRANSLATION INITIATION FACTOR IF-2-RELATED"/>
    <property type="match status" value="1"/>
</dbReference>
<dbReference type="Pfam" id="PF22042">
    <property type="entry name" value="EF-G_D2"/>
    <property type="match status" value="1"/>
</dbReference>
<dbReference type="Pfam" id="PF00009">
    <property type="entry name" value="GTP_EFTU"/>
    <property type="match status" value="1"/>
</dbReference>
<dbReference type="Pfam" id="PF11987">
    <property type="entry name" value="IF-2"/>
    <property type="match status" value="1"/>
</dbReference>
<dbReference type="Pfam" id="PF08364">
    <property type="entry name" value="IF2_assoc"/>
    <property type="match status" value="1"/>
</dbReference>
<dbReference type="Pfam" id="PF04760">
    <property type="entry name" value="IF2_N"/>
    <property type="match status" value="2"/>
</dbReference>
<dbReference type="SUPFAM" id="SSF52156">
    <property type="entry name" value="Initiation factor IF2/eIF5b, domain 3"/>
    <property type="match status" value="1"/>
</dbReference>
<dbReference type="SUPFAM" id="SSF52540">
    <property type="entry name" value="P-loop containing nucleoside triphosphate hydrolases"/>
    <property type="match status" value="1"/>
</dbReference>
<dbReference type="SUPFAM" id="SSF46955">
    <property type="entry name" value="Putative DNA-binding domain"/>
    <property type="match status" value="1"/>
</dbReference>
<dbReference type="SUPFAM" id="SSF50447">
    <property type="entry name" value="Translation proteins"/>
    <property type="match status" value="2"/>
</dbReference>
<dbReference type="PROSITE" id="PS51722">
    <property type="entry name" value="G_TR_2"/>
    <property type="match status" value="1"/>
</dbReference>
<dbReference type="PROSITE" id="PS01176">
    <property type="entry name" value="IF2"/>
    <property type="match status" value="1"/>
</dbReference>